<comment type="function">
    <text evidence="8 9 10 11 14 16 19 20 23 24">Negative regulator of YAP1 in the Hippo signaling pathway that plays a pivotal role in organ size control and tumor suppression by restricting proliferation and promoting apoptosis (PubMed:10518011, PubMed:10831611, PubMed:18158288, PubMed:26437443, PubMed:28068668). The core of this pathway is composed of a kinase cascade wherein STK3/MST2 and STK4/MST1, in complex with its regulatory protein SAV1, phosphorylates and activates LATS1/2 in complex with its regulatory protein MOB1, which in turn phosphorylates and inactivates YAP1 oncoprotein and WWTR1/TAZ (PubMed:18158288, PubMed:26437443, PubMed:28068668). Phosphorylation of YAP1 by LATS1 inhibits its translocation into the nucleus to regulate cellular genes important for cell proliferation, cell death, and cell migration (PubMed:18158288, PubMed:26437443, PubMed:28068668). Acts as a tumor suppressor which plays a critical role in maintenance of ploidy through its actions in both mitotic progression and the G1 tetraploidy checkpoint (PubMed:15122335, PubMed:19927127). Negatively regulates G2/M transition by down-regulating CDK1 kinase activity (PubMed:9988268). Involved in the control of p53 expression (PubMed:15122335). Affects cytokinesis by regulating actin polymerization through negative modulation of LIMK1 (PubMed:15220930). May also play a role in endocrine function. Plays a role in mammary gland epithelial cell differentiation, both through the Hippo signaling pathway and the intracellular estrogen receptor signaling pathway by promoting the degradation of ESR1 (PubMed:28068668). Acts as an activator of the NLRP3 inflammasome by mediating phosphorylation of 'Ser-265' of NLRP3 following NLRP3 palmitoylation, promoting NLRP3 activation by NEK7 (PubMed:39173637).</text>
</comment>
<comment type="catalytic activity">
    <reaction evidence="8 10 23">
        <text>L-seryl-[protein] + ATP = O-phospho-L-seryl-[protein] + ADP + H(+)</text>
        <dbReference type="Rhea" id="RHEA:17989"/>
        <dbReference type="Rhea" id="RHEA-COMP:9863"/>
        <dbReference type="Rhea" id="RHEA-COMP:11604"/>
        <dbReference type="ChEBI" id="CHEBI:15378"/>
        <dbReference type="ChEBI" id="CHEBI:29999"/>
        <dbReference type="ChEBI" id="CHEBI:30616"/>
        <dbReference type="ChEBI" id="CHEBI:83421"/>
        <dbReference type="ChEBI" id="CHEBI:456216"/>
        <dbReference type="EC" id="2.7.11.1"/>
    </reaction>
</comment>
<comment type="catalytic activity">
    <reaction evidence="8 10">
        <text>L-threonyl-[protein] + ATP = O-phospho-L-threonyl-[protein] + ADP + H(+)</text>
        <dbReference type="Rhea" id="RHEA:46608"/>
        <dbReference type="Rhea" id="RHEA-COMP:11060"/>
        <dbReference type="Rhea" id="RHEA-COMP:11605"/>
        <dbReference type="ChEBI" id="CHEBI:15378"/>
        <dbReference type="ChEBI" id="CHEBI:30013"/>
        <dbReference type="ChEBI" id="CHEBI:30616"/>
        <dbReference type="ChEBI" id="CHEBI:61977"/>
        <dbReference type="ChEBI" id="CHEBI:456216"/>
        <dbReference type="EC" id="2.7.11.1"/>
    </reaction>
</comment>
<comment type="cofactor">
    <cofactor>
        <name>Mg(2+)</name>
        <dbReference type="ChEBI" id="CHEBI:18420"/>
    </cofactor>
</comment>
<comment type="subunit">
    <text evidence="2 9 11 14 15 17 18 20 21 22 24">Complexes with CDK1 in early mitosis (PubMed:9988268). LATS1-associated CDK1 has no mitotic cyclin partner and no apparent kinase activity (PubMed:9988268). Binds phosphorylated ZYX, locating this protein to the mitotic spindle and suggesting a role for actin regulatory proteins during mitosis (PubMed:10831611). Binds to and colocalizes with LIMK1 at the actomyosin contractile ring during cytokinesis (PubMed:15220930). Interacts (via PPxY motif 2) with YAP1 (via WW domains) (PubMed:18158288). Interacts with MOB1A and MOB1B (PubMed:19739119). Interacts with LIMD1, WTIP and AJUBA (PubMed:20303269). Interacts with ESR1, DCAF1 and DCAF13; probably recruits DCAF1 and DCAF13 to ESR1 to promote ESR1 ubiquitination and ubiquitin-mediated proteasomal degradation (PubMed:28068668). Interacts with STK3/MST2; this interaction is inhibited in the presence of DLG5 (PubMed:28087714). Interacts with SCRIB in the presence of DLG5 (PubMed:28169360). Interacts with WWTR1/TAZ (By similarity). Interacts with WWC1, WWC2 and WWC3 (via their WW domains) (PubMed:24682284).</text>
</comment>
<comment type="interaction">
    <interactant intactId="EBI-444209">
        <id>O95835</id>
    </interactant>
    <interactant intactId="EBI-444308">
        <id>P06493</id>
        <label>CDK1</label>
    </interactant>
    <organismsDiffer>false</organismsDiffer>
    <experiments>3</experiments>
</comment>
<comment type="interaction">
    <interactant intactId="EBI-444209">
        <id>O95835</id>
    </interactant>
    <interactant intactId="EBI-375096">
        <id>P24941</id>
        <label>CDK2</label>
    </interactant>
    <organismsDiffer>false</organismsDiffer>
    <experiments>4</experiments>
</comment>
<comment type="interaction">
    <interactant intactId="EBI-444209">
        <id>O95835</id>
    </interactant>
    <interactant intactId="EBI-1996353">
        <id>Q9Y4B6</id>
        <label>DCAF1</label>
    </interactant>
    <organismsDiffer>false</organismsDiffer>
    <experiments>4</experiments>
</comment>
<comment type="interaction">
    <interactant intactId="EBI-444209">
        <id>O95835</id>
    </interactant>
    <interactant intactId="EBI-78473">
        <id>P03372</id>
        <label>ESR1</label>
    </interactant>
    <organismsDiffer>false</organismsDiffer>
    <experiments>2</experiments>
</comment>
<comment type="interaction">
    <interactant intactId="EBI-444209">
        <id>O95835</id>
    </interactant>
    <interactant intactId="EBI-444403">
        <id>P53667</id>
        <label>LIMK1</label>
    </interactant>
    <organismsDiffer>false</organismsDiffer>
    <experiments>5</experiments>
</comment>
<comment type="interaction">
    <interactant intactId="EBI-444209">
        <id>O95835</id>
    </interactant>
    <interactant intactId="EBI-748229">
        <id>Q9H8S9</id>
        <label>MOB1A</label>
    </interactant>
    <organismsDiffer>false</organismsDiffer>
    <experiments>9</experiments>
</comment>
<comment type="interaction">
    <interactant intactId="EBI-444209">
        <id>O95835</id>
    </interactant>
    <interactant intactId="EBI-2558745">
        <id>Q7L9L4</id>
        <label>MOB1B</label>
    </interactant>
    <organismsDiffer>false</organismsDiffer>
    <experiments>9</experiments>
</comment>
<comment type="interaction">
    <interactant intactId="EBI-444209">
        <id>O95835</id>
    </interactant>
    <interactant intactId="EBI-1014472">
        <id>P35240</id>
        <label>NF2</label>
    </interactant>
    <organismsDiffer>false</organismsDiffer>
    <experiments>4</experiments>
</comment>
<comment type="interaction">
    <interactant intactId="EBI-444209">
        <id>O95835</id>
    </interactant>
    <interactant intactId="EBI-1046789">
        <id>O60285</id>
        <label>NUAK1</label>
    </interactant>
    <organismsDiffer>false</organismsDiffer>
    <experiments>2</experiments>
</comment>
<comment type="interaction">
    <interactant intactId="EBI-444209">
        <id>O95835</id>
    </interactant>
    <interactant intactId="EBI-948141">
        <id>O43255</id>
        <label>SIAH2</label>
    </interactant>
    <organismsDiffer>false</organismsDiffer>
    <experiments>2</experiments>
</comment>
<comment type="interaction">
    <interactant intactId="EBI-444209">
        <id>O95835</id>
    </interactant>
    <interactant intactId="EBI-306838">
        <id>Q15831</id>
        <label>STK11</label>
    </interactant>
    <organismsDiffer>false</organismsDiffer>
    <experiments>2</experiments>
</comment>
<comment type="interaction">
    <interactant intactId="EBI-444209">
        <id>O95835</id>
    </interactant>
    <interactant intactId="EBI-747743">
        <id>Q9GZV5</id>
        <label>WWTR1</label>
    </interactant>
    <organismsDiffer>false</organismsDiffer>
    <experiments>5</experiments>
</comment>
<comment type="interaction">
    <interactant intactId="EBI-444209">
        <id>O95835</id>
    </interactant>
    <interactant intactId="EBI-1044059">
        <id>P46937</id>
        <label>YAP1</label>
    </interactant>
    <organismsDiffer>false</organismsDiffer>
    <experiments>10</experiments>
</comment>
<comment type="interaction">
    <interactant intactId="EBI-444209">
        <id>O95835</id>
    </interactant>
    <interactant intactId="EBI-444225">
        <id>Q15942</id>
        <label>ZYX</label>
    </interactant>
    <organismsDiffer>false</organismsDiffer>
    <experiments>10</experiments>
</comment>
<comment type="interaction">
    <interactant intactId="EBI-444209">
        <id>O95835</id>
    </interactant>
    <interactant intactId="EBI-644586">
        <id>P46662</id>
        <label>Nf2</label>
    </interactant>
    <organismsDiffer>true</organismsDiffer>
    <experiments>5</experiments>
</comment>
<comment type="interaction">
    <interactant intactId="EBI-17978514">
        <id>O95835-2</id>
    </interactant>
    <interactant intactId="EBI-351829">
        <id>O15145</id>
        <label>ARPC3</label>
    </interactant>
    <organismsDiffer>false</organismsDiffer>
    <experiments>3</experiments>
</comment>
<comment type="interaction">
    <interactant intactId="EBI-17978514">
        <id>O95835-2</id>
    </interactant>
    <interactant intactId="EBI-947187">
        <id>Q9UHD9</id>
        <label>UBQLN2</label>
    </interactant>
    <organismsDiffer>false</organismsDiffer>
    <experiments>3</experiments>
</comment>
<comment type="subcellular location">
    <subcellularLocation>
        <location evidence="8">Cytoplasm</location>
        <location evidence="8">Cytoskeleton</location>
        <location evidence="8">Microtubule organizing center</location>
        <location evidence="8">Centrosome</location>
    </subcellularLocation>
    <subcellularLocation>
        <location evidence="8">Cytoplasm</location>
        <location evidence="8">Cytoskeleton</location>
        <location evidence="8">Spindle</location>
    </subcellularLocation>
    <subcellularLocation>
        <location evidence="8">Midbody</location>
    </subcellularLocation>
    <subcellularLocation>
        <location evidence="8">Cytoplasm</location>
        <location evidence="8">Cytoskeleton</location>
        <location evidence="8">Microtubule organizing center</location>
        <location evidence="8">Spindle pole body</location>
    </subcellularLocation>
    <text evidence="8">Localizes to the centrosomes throughout interphase but migrates to the mitotic apparatus, including spindle pole bodies, mitotic spindle, and midbody, during mitosis.</text>
</comment>
<comment type="alternative products">
    <event type="alternative splicing"/>
    <isoform>
        <id>O95835-1</id>
        <name evidence="24">1</name>
        <sequence type="displayed"/>
    </isoform>
    <isoform>
        <id>O95835-2</id>
        <name evidence="26">2</name>
        <sequence type="described" ref="VSP_051604 VSP_051605"/>
    </isoform>
</comment>
<comment type="tissue specificity">
    <text evidence="8">Expressed in all adult tissues examined except for lung and kidney.</text>
</comment>
<comment type="PTM">
    <text evidence="8 10 12 16 19 24">Autophosphorylated and phosphorylated during M-phase of the cell cycle (PubMed:10518011, PubMed:15122335, PubMed:9988268). Phosphorylated by STK3/MST2 at Ser-909 and Thr-1079, which results in its activation (PubMed:15688006). Phosphorylated by MAP4Ks; in parallel to STK3/MST2 and resulting to its activation (PubMed:26437443). Phosphorylation at Ser-464 by NUAK1 and NUAK2 leads to decreased protein level and is required to regulate cellular senescence and cellular ploidy (PubMed:19927127).</text>
</comment>
<comment type="similarity">
    <text evidence="26">Belongs to the protein kinase superfamily. AGC Ser/Thr protein kinase family.</text>
</comment>
<comment type="online information" name="Atlas of Genetics and Cytogenetics in Oncology and Haematology">
    <link uri="https://atlasgeneticsoncology.org/gene/41127/LATS1"/>
</comment>
<feature type="chain" id="PRO_0000086232" description="Serine/threonine-protein kinase LATS1">
    <location>
        <begin position="1"/>
        <end position="1130"/>
    </location>
</feature>
<feature type="domain" description="UBA" evidence="4">
    <location>
        <begin position="100"/>
        <end position="141"/>
    </location>
</feature>
<feature type="domain" description="Protein kinase" evidence="3">
    <location>
        <begin position="705"/>
        <end position="1010"/>
    </location>
</feature>
<feature type="domain" description="AGC-kinase C-terminal" evidence="5">
    <location>
        <begin position="1011"/>
        <end position="1090"/>
    </location>
</feature>
<feature type="region of interest" description="Disordered" evidence="7">
    <location>
        <begin position="1"/>
        <end position="71"/>
    </location>
</feature>
<feature type="region of interest" description="Disordered" evidence="7">
    <location>
        <begin position="149"/>
        <end position="276"/>
    </location>
</feature>
<feature type="region of interest" description="Disordered" evidence="7">
    <location>
        <begin position="294"/>
        <end position="321"/>
    </location>
</feature>
<feature type="region of interest" description="Disordered" evidence="7">
    <location>
        <begin position="365"/>
        <end position="405"/>
    </location>
</feature>
<feature type="region of interest" description="Disordered" evidence="7">
    <location>
        <begin position="432"/>
        <end position="484"/>
    </location>
</feature>
<feature type="region of interest" description="Disordered" evidence="7">
    <location>
        <begin position="515"/>
        <end position="631"/>
    </location>
</feature>
<feature type="region of interest" description="Interaction with YAP1" evidence="14">
    <location>
        <begin position="526"/>
        <end position="655"/>
    </location>
</feature>
<feature type="region of interest" description="Disordered" evidence="7">
    <location>
        <begin position="1104"/>
        <end position="1130"/>
    </location>
</feature>
<feature type="short sequence motif" description="PPxY motif 1">
    <location>
        <begin position="373"/>
        <end position="376"/>
    </location>
</feature>
<feature type="short sequence motif" description="PPxY motif 2">
    <location>
        <begin position="556"/>
        <end position="559"/>
    </location>
</feature>
<feature type="compositionally biased region" description="Basic and acidic residues" evidence="7">
    <location>
        <begin position="1"/>
        <end position="11"/>
    </location>
</feature>
<feature type="compositionally biased region" description="Polar residues" evidence="7">
    <location>
        <begin position="19"/>
        <end position="30"/>
    </location>
</feature>
<feature type="compositionally biased region" description="Basic and acidic residues" evidence="7">
    <location>
        <begin position="46"/>
        <end position="64"/>
    </location>
</feature>
<feature type="compositionally biased region" description="Polar residues" evidence="7">
    <location>
        <begin position="167"/>
        <end position="179"/>
    </location>
</feature>
<feature type="compositionally biased region" description="Pro residues" evidence="7">
    <location>
        <begin position="235"/>
        <end position="268"/>
    </location>
</feature>
<feature type="compositionally biased region" description="Pro residues" evidence="7">
    <location>
        <begin position="300"/>
        <end position="312"/>
    </location>
</feature>
<feature type="compositionally biased region" description="Polar residues" evidence="7">
    <location>
        <begin position="381"/>
        <end position="405"/>
    </location>
</feature>
<feature type="compositionally biased region" description="Low complexity" evidence="7">
    <location>
        <begin position="434"/>
        <end position="447"/>
    </location>
</feature>
<feature type="compositionally biased region" description="Polar residues" evidence="7">
    <location>
        <begin position="454"/>
        <end position="482"/>
    </location>
</feature>
<feature type="compositionally biased region" description="Basic and acidic residues" evidence="7">
    <location>
        <begin position="579"/>
        <end position="609"/>
    </location>
</feature>
<feature type="compositionally biased region" description="Basic and acidic residues" evidence="7">
    <location>
        <begin position="621"/>
        <end position="630"/>
    </location>
</feature>
<feature type="active site" description="Proton acceptor" evidence="1 3 6">
    <location>
        <position position="828"/>
    </location>
</feature>
<feature type="binding site" evidence="1 3">
    <location>
        <begin position="711"/>
        <end position="719"/>
    </location>
    <ligand>
        <name>ATP</name>
        <dbReference type="ChEBI" id="CHEBI:30616"/>
    </ligand>
</feature>
<feature type="binding site" evidence="3 10">
    <location>
        <position position="734"/>
    </location>
    <ligand>
        <name>ATP</name>
        <dbReference type="ChEBI" id="CHEBI:30616"/>
    </ligand>
</feature>
<feature type="modified residue" description="Phosphothreonine" evidence="31 32">
    <location>
        <position position="246"/>
    </location>
</feature>
<feature type="modified residue" description="Phosphoserine" evidence="31">
    <location>
        <position position="278"/>
    </location>
</feature>
<feature type="modified residue" description="Phosphoserine; by NUAK1 and NUAK2" evidence="16 31 32">
    <location>
        <position position="464"/>
    </location>
</feature>
<feature type="modified residue" description="Phosphoserine" evidence="32">
    <location>
        <position position="613"/>
    </location>
</feature>
<feature type="modified residue" description="Phosphoserine" evidence="30">
    <location>
        <position position="674"/>
    </location>
</feature>
<feature type="modified residue" description="Phosphoserine; by STK3/MST2" evidence="12">
    <location>
        <position position="909"/>
    </location>
</feature>
<feature type="modified residue" description="Phosphothreonine; by STK3/MST2" evidence="12 21">
    <location>
        <position position="1079"/>
    </location>
</feature>
<feature type="splice variant" id="VSP_051604" description="In isoform 2." evidence="25">
    <original>GLSQDAQDQMRKMLCQKES</original>
    <variation>KPFKMSIFILNHLFAWCLF</variation>
    <location>
        <begin position="672"/>
        <end position="690"/>
    </location>
</feature>
<feature type="splice variant" id="VSP_051605" description="In isoform 2." evidence="25">
    <location>
        <begin position="691"/>
        <end position="1130"/>
    </location>
</feature>
<feature type="sequence variant" id="VAR_040660" description="In dbSNP:rs55945045." evidence="13">
    <original>R</original>
    <variation>W</variation>
    <location>
        <position position="96"/>
    </location>
</feature>
<feature type="sequence variant" id="VAR_040661" description="In dbSNP:rs34793526." evidence="13">
    <original>S</original>
    <variation>G</variation>
    <location>
        <position position="204"/>
    </location>
</feature>
<feature type="sequence variant" id="VAR_040662" description="In dbSNP:rs56149740." evidence="13">
    <original>P</original>
    <variation>Q</variation>
    <location>
        <position position="237"/>
    </location>
</feature>
<feature type="sequence variant" id="VAR_040663" description="In dbSNP:rs56348064." evidence="13">
    <original>R</original>
    <variation>W</variation>
    <location>
        <position position="370"/>
    </location>
</feature>
<feature type="sequence variant" id="VAR_040664" description="In dbSNP:rs55874734." evidence="13">
    <original>P</original>
    <variation>S</variation>
    <location>
        <position position="531"/>
    </location>
</feature>
<feature type="sequence variant" id="VAR_040665" description="In dbSNP:rs35163691." evidence="13">
    <original>F</original>
    <variation>L</variation>
    <location>
        <position position="641"/>
    </location>
</feature>
<feature type="sequence variant" id="VAR_040666" description="In a lung adenocarcinoma sample; somatic mutation; dbSNP:rs1390558952." evidence="13">
    <original>M</original>
    <variation>I</variation>
    <location>
        <position position="669"/>
    </location>
</feature>
<feature type="sequence variant" id="VAR_040667" description="In a lung large cell carcinoma sample; somatic mutation." evidence="13">
    <original>R</original>
    <variation>P</variation>
    <location>
        <position position="806"/>
    </location>
</feature>
<feature type="sequence variant" id="VAR_040668" description="In dbSNP:rs56412005." evidence="13">
    <original>G</original>
    <variation>S</variation>
    <location>
        <position position="1000"/>
    </location>
</feature>
<feature type="mutagenesis site" description="Abolishes phosphorylation by NUAK1 and NUAK2." evidence="16">
    <original>S</original>
    <variation>A</variation>
    <location>
        <position position="464"/>
    </location>
</feature>
<feature type="mutagenesis site" description="Loss of interaction with YAP1." evidence="14">
    <original>Y</original>
    <variation>F</variation>
    <location>
        <position position="559"/>
    </location>
</feature>
<feature type="mutagenesis site" description="Loss of kinase activity, autophosphorylation, increased ploidy, prolonged duration of mitosis and lack of p53 expression." evidence="10">
    <original>K</original>
    <variation>A</variation>
    <location>
        <position position="734"/>
    </location>
</feature>
<feature type="helix" evidence="34">
    <location>
        <begin position="72"/>
        <end position="74"/>
    </location>
</feature>
<feature type="helix" evidence="34">
    <location>
        <begin position="75"/>
        <end position="85"/>
    </location>
</feature>
<feature type="helix" evidence="34">
    <location>
        <begin position="86"/>
        <end position="88"/>
    </location>
</feature>
<feature type="helix" evidence="33">
    <location>
        <begin position="637"/>
        <end position="671"/>
    </location>
</feature>
<feature type="helix" evidence="33">
    <location>
        <begin position="675"/>
        <end position="697"/>
    </location>
</feature>
<protein>
    <recommendedName>
        <fullName>Serine/threonine-protein kinase LATS1</fullName>
        <ecNumber evidence="8 10 23">2.7.11.1</ecNumber>
    </recommendedName>
    <alternativeName>
        <fullName>Large tumor suppressor homolog 1</fullName>
    </alternativeName>
    <alternativeName>
        <fullName>WARTS protein kinase</fullName>
        <shortName>h-warts</shortName>
    </alternativeName>
</protein>
<sequence length="1130" mass="126870">MKRSEKPEGYRQMRPKTFPASNYTVSSRQMLQEIRESLRNLSKPSDAAKAEHNMSKMSTEDPRQVRNPPKFGTHHKALQEIRNSLLPFANETNSSRSTSEVNPQMLQDLQAAGFDEDMVIQALQKTNNRSIEAAIEFISKMSYQDPRREQMAAAAARPINASMKPGNVQQSVNRKQSWKGSKESLVPQRHGPPLGESVAYHSESPNSQTDVGRPLSGSGISAFVQAHPSNGQRVNPPPPPQVRSVTPPPPPRGQTPPPRGTTPPPPSWEPNSQTKRYSGNMEYVISRISPVPPGAWQEGYPPPPLNTSPMNPPNQGQRGISSVPVGRQPIIMQSSSKFNFPSGRPGMQNGTGQTDFMIHQNVVPAGTVNRQPPPPYPLTAANGQSPSALQTGGSAAPSSYTNGSIPQSMMVPNRNSHNMELYNISVPGLQTNWPQSSSAPAQSSPSSGHEIPTWQPNIPVRSNSFNNPLGNRASHSANSQPSATTVTAITPAPIQQPVKSMRVLKPELQTALAPTHPSWIPQPIQTVQPSPFPEGTASNVTVMPPVAEAPNYQGPPPPYPKHLLHQNPSVPPYESISKPSKEDQPSLPKEDESEKSYENVDSGDKEKKQITTSPITVRKNKKDEERRESRIQSYSPQAFKFFMEQHVENVLKSHQQRLHRKKQLENEMMRVGLSQDAQDQMRKMLCQKESNYIRLKRAKMDKSMFVKIKTLGIGAFGEVCLARKVDTKALYATKTLRKKDVLLRNQVAHVKAERDILAEADNEWVVRLYYSFQDKDNLYFVMDYIPGGDMMSLLIRMGIFPESLARFYIAELTCAVESVHKMGFIHRDIKPDNILIDRDGHIKLTDFGLCTGFRWTHDSKYYQSGDHPRQDSMDFSNEWGDPSSCRCGDRLKPLERRAARQHQRCLAHSLVGTPNYIAPEVLLRTGYTQLCDWWSVGVILFEMLVGQPPFLAQTPLETQMKVINWQTSLHIPPQAKLSPEASDLIIKLCRGPEDRLGKNGADEIKAHPFFKTIDFSSDLRQQSASYIPKITHPTDTSNFDPVDPDKLWSDDNEEENVNDTLNGWYKNGKHPEHAFYEFTFRRFFDDNGYPYNYPKPIEYEYINSQGSEQQSDEDDQNTGSEIKNRDLVYV</sequence>
<dbReference type="EC" id="2.7.11.1" evidence="8 10 23"/>
<dbReference type="EMBL" id="AF104413">
    <property type="protein sequence ID" value="AAD16882.1"/>
    <property type="molecule type" value="mRNA"/>
</dbReference>
<dbReference type="EMBL" id="AF164041">
    <property type="protein sequence ID" value="AAD50272.1"/>
    <property type="molecule type" value="mRNA"/>
</dbReference>
<dbReference type="EMBL" id="BC002767">
    <property type="protein sequence ID" value="AAH02767.1"/>
    <property type="molecule type" value="mRNA"/>
</dbReference>
<dbReference type="CCDS" id="CCDS34551.1">
    <molecule id="O95835-1"/>
</dbReference>
<dbReference type="CCDS" id="CCDS59040.1">
    <molecule id="O95835-2"/>
</dbReference>
<dbReference type="RefSeq" id="NP_001257448.1">
    <molecule id="O95835-2"/>
    <property type="nucleotide sequence ID" value="NM_001270519.2"/>
</dbReference>
<dbReference type="RefSeq" id="NP_004681.1">
    <molecule id="O95835-1"/>
    <property type="nucleotide sequence ID" value="NM_004690.4"/>
</dbReference>
<dbReference type="RefSeq" id="XP_047275474.1">
    <molecule id="O95835-1"/>
    <property type="nucleotide sequence ID" value="XM_047419518.1"/>
</dbReference>
<dbReference type="RefSeq" id="XP_054212722.1">
    <molecule id="O95835-1"/>
    <property type="nucleotide sequence ID" value="XM_054356747.1"/>
</dbReference>
<dbReference type="PDB" id="4ZRK">
    <property type="method" value="X-ray"/>
    <property type="resolution" value="2.32 A"/>
    <property type="chains" value="E/F/G/H=69-100"/>
</dbReference>
<dbReference type="PDB" id="5B5W">
    <property type="method" value="X-ray"/>
    <property type="resolution" value="2.96 A"/>
    <property type="chains" value="U=622-704"/>
</dbReference>
<dbReference type="PDB" id="5BRK">
    <property type="method" value="X-ray"/>
    <property type="resolution" value="2.30 A"/>
    <property type="chains" value="B=602-704"/>
</dbReference>
<dbReference type="PDB" id="7LWH">
    <property type="method" value="X-ray"/>
    <property type="resolution" value="1.61 A"/>
    <property type="chains" value="B=69-91"/>
</dbReference>
<dbReference type="PDBsum" id="4ZRK"/>
<dbReference type="PDBsum" id="5B5W"/>
<dbReference type="PDBsum" id="5BRK"/>
<dbReference type="PDBsum" id="7LWH"/>
<dbReference type="SMR" id="O95835"/>
<dbReference type="BioGRID" id="114563">
    <property type="interactions" value="457"/>
</dbReference>
<dbReference type="CORUM" id="O95835"/>
<dbReference type="DIP" id="DIP-31516N"/>
<dbReference type="FunCoup" id="O95835">
    <property type="interactions" value="4799"/>
</dbReference>
<dbReference type="IntAct" id="O95835">
    <property type="interactions" value="106"/>
</dbReference>
<dbReference type="MINT" id="O95835"/>
<dbReference type="STRING" id="9606.ENSP00000437550"/>
<dbReference type="BindingDB" id="O95835"/>
<dbReference type="ChEMBL" id="CHEMBL6167"/>
<dbReference type="DrugBank" id="DB12010">
    <property type="generic name" value="Fostamatinib"/>
</dbReference>
<dbReference type="DrugCentral" id="O95835"/>
<dbReference type="GuidetoPHARMACOLOGY" id="1515"/>
<dbReference type="MoonProt" id="O95835"/>
<dbReference type="GlyGen" id="O95835">
    <property type="glycosylation" value="6 sites, 1 N-linked glycan (1 site), 1 O-linked glycan (4 sites)"/>
</dbReference>
<dbReference type="iPTMnet" id="O95835"/>
<dbReference type="PhosphoSitePlus" id="O95835"/>
<dbReference type="BioMuta" id="LATS1"/>
<dbReference type="CPTAC" id="CPTAC-3110"/>
<dbReference type="CPTAC" id="CPTAC-3111"/>
<dbReference type="jPOST" id="O95835"/>
<dbReference type="MassIVE" id="O95835"/>
<dbReference type="PaxDb" id="9606-ENSP00000437550"/>
<dbReference type="PeptideAtlas" id="O95835"/>
<dbReference type="ProteomicsDB" id="51081">
    <molecule id="O95835-1"/>
</dbReference>
<dbReference type="ProteomicsDB" id="51082">
    <molecule id="O95835-2"/>
</dbReference>
<dbReference type="Pumba" id="O95835"/>
<dbReference type="Antibodypedia" id="33280">
    <property type="antibodies" value="394 antibodies from 32 providers"/>
</dbReference>
<dbReference type="DNASU" id="9113"/>
<dbReference type="Ensembl" id="ENST00000253339.9">
    <molecule id="O95835-1"/>
    <property type="protein sequence ID" value="ENSP00000253339.5"/>
    <property type="gene ID" value="ENSG00000131023.13"/>
</dbReference>
<dbReference type="Ensembl" id="ENST00000392273.7">
    <molecule id="O95835-2"/>
    <property type="protein sequence ID" value="ENSP00000444678.1"/>
    <property type="gene ID" value="ENSG00000131023.13"/>
</dbReference>
<dbReference type="Ensembl" id="ENST00000543571.6">
    <molecule id="O95835-1"/>
    <property type="protein sequence ID" value="ENSP00000437550.1"/>
    <property type="gene ID" value="ENSG00000131023.13"/>
</dbReference>
<dbReference type="GeneID" id="9113"/>
<dbReference type="KEGG" id="hsa:9113"/>
<dbReference type="MANE-Select" id="ENST00000543571.6">
    <property type="protein sequence ID" value="ENSP00000437550.1"/>
    <property type="RefSeq nucleotide sequence ID" value="NM_004690.4"/>
    <property type="RefSeq protein sequence ID" value="NP_004681.1"/>
</dbReference>
<dbReference type="UCSC" id="uc003qmu.2">
    <molecule id="O95835-1"/>
    <property type="organism name" value="human"/>
</dbReference>
<dbReference type="AGR" id="HGNC:6514"/>
<dbReference type="CTD" id="9113"/>
<dbReference type="DisGeNET" id="9113"/>
<dbReference type="GeneCards" id="LATS1"/>
<dbReference type="HGNC" id="HGNC:6514">
    <property type="gene designation" value="LATS1"/>
</dbReference>
<dbReference type="HPA" id="ENSG00000131023">
    <property type="expression patterns" value="Low tissue specificity"/>
</dbReference>
<dbReference type="MalaCards" id="LATS1"/>
<dbReference type="MIM" id="603473">
    <property type="type" value="gene"/>
</dbReference>
<dbReference type="neXtProt" id="NX_O95835"/>
<dbReference type="OpenTargets" id="ENSG00000131023"/>
<dbReference type="PharmGKB" id="PA30301"/>
<dbReference type="VEuPathDB" id="HostDB:ENSG00000131023"/>
<dbReference type="eggNOG" id="KOG0608">
    <property type="taxonomic scope" value="Eukaryota"/>
</dbReference>
<dbReference type="GeneTree" id="ENSGT00940000157684"/>
<dbReference type="HOGENOM" id="CLU_004885_0_0_1"/>
<dbReference type="InParanoid" id="O95835"/>
<dbReference type="OMA" id="NHHGSRQ"/>
<dbReference type="OrthoDB" id="3638488at2759"/>
<dbReference type="PAN-GO" id="O95835">
    <property type="GO annotations" value="7 GO annotations based on evolutionary models"/>
</dbReference>
<dbReference type="PhylomeDB" id="O95835"/>
<dbReference type="TreeFam" id="TF351549"/>
<dbReference type="PathwayCommons" id="O95835"/>
<dbReference type="Reactome" id="R-HSA-2028269">
    <property type="pathway name" value="Signaling by Hippo"/>
</dbReference>
<dbReference type="SignaLink" id="O95835"/>
<dbReference type="SIGNOR" id="O95835"/>
<dbReference type="BioGRID-ORCS" id="9113">
    <property type="hits" value="25 hits in 1204 CRISPR screens"/>
</dbReference>
<dbReference type="CD-CODE" id="8C2F96ED">
    <property type="entry name" value="Centrosome"/>
</dbReference>
<dbReference type="ChiTaRS" id="LATS1">
    <property type="organism name" value="human"/>
</dbReference>
<dbReference type="EvolutionaryTrace" id="O95835"/>
<dbReference type="GeneWiki" id="LATS1"/>
<dbReference type="GenomeRNAi" id="9113"/>
<dbReference type="Pharos" id="O95835">
    <property type="development level" value="Tchem"/>
</dbReference>
<dbReference type="PRO" id="PR:O95835"/>
<dbReference type="Proteomes" id="UP000005640">
    <property type="component" value="Chromosome 6"/>
</dbReference>
<dbReference type="RNAct" id="O95835">
    <property type="molecule type" value="protein"/>
</dbReference>
<dbReference type="Bgee" id="ENSG00000131023">
    <property type="expression patterns" value="Expressed in germinal epithelium of ovary and 183 other cell types or tissues"/>
</dbReference>
<dbReference type="ExpressionAtlas" id="O95835">
    <property type="expression patterns" value="baseline and differential"/>
</dbReference>
<dbReference type="GO" id="GO:0005813">
    <property type="term" value="C:centrosome"/>
    <property type="evidence" value="ECO:0007669"/>
    <property type="project" value="UniProtKB-SubCell"/>
</dbReference>
<dbReference type="GO" id="GO:0005737">
    <property type="term" value="C:cytoplasm"/>
    <property type="evidence" value="ECO:0000314"/>
    <property type="project" value="UniProt"/>
</dbReference>
<dbReference type="GO" id="GO:0005829">
    <property type="term" value="C:cytosol"/>
    <property type="evidence" value="ECO:0000304"/>
    <property type="project" value="Reactome"/>
</dbReference>
<dbReference type="GO" id="GO:0098978">
    <property type="term" value="C:glutamatergic synapse"/>
    <property type="evidence" value="ECO:0007669"/>
    <property type="project" value="Ensembl"/>
</dbReference>
<dbReference type="GO" id="GO:0005815">
    <property type="term" value="C:microtubule organizing center"/>
    <property type="evidence" value="ECO:0000314"/>
    <property type="project" value="UniProt"/>
</dbReference>
<dbReference type="GO" id="GO:0030496">
    <property type="term" value="C:midbody"/>
    <property type="evidence" value="ECO:0007669"/>
    <property type="project" value="UniProtKB-SubCell"/>
</dbReference>
<dbReference type="GO" id="GO:0005634">
    <property type="term" value="C:nucleus"/>
    <property type="evidence" value="ECO:0000250"/>
    <property type="project" value="UniProtKB"/>
</dbReference>
<dbReference type="GO" id="GO:0098794">
    <property type="term" value="C:postsynapse"/>
    <property type="evidence" value="ECO:0007669"/>
    <property type="project" value="Ensembl"/>
</dbReference>
<dbReference type="GO" id="GO:0000922">
    <property type="term" value="C:spindle pole"/>
    <property type="evidence" value="ECO:0000314"/>
    <property type="project" value="UniProtKB"/>
</dbReference>
<dbReference type="GO" id="GO:0005524">
    <property type="term" value="F:ATP binding"/>
    <property type="evidence" value="ECO:0000314"/>
    <property type="project" value="UniProtKB"/>
</dbReference>
<dbReference type="GO" id="GO:0000287">
    <property type="term" value="F:magnesium ion binding"/>
    <property type="evidence" value="ECO:0000314"/>
    <property type="project" value="UniProtKB"/>
</dbReference>
<dbReference type="GO" id="GO:0030331">
    <property type="term" value="F:nuclear estrogen receptor binding"/>
    <property type="evidence" value="ECO:0000353"/>
    <property type="project" value="UniProtKB"/>
</dbReference>
<dbReference type="GO" id="GO:0019901">
    <property type="term" value="F:protein kinase binding"/>
    <property type="evidence" value="ECO:0000353"/>
    <property type="project" value="UniProtKB"/>
</dbReference>
<dbReference type="GO" id="GO:0106310">
    <property type="term" value="F:protein serine kinase activity"/>
    <property type="evidence" value="ECO:0007669"/>
    <property type="project" value="RHEA"/>
</dbReference>
<dbReference type="GO" id="GO:0004674">
    <property type="term" value="F:protein serine/threonine kinase activity"/>
    <property type="evidence" value="ECO:0000314"/>
    <property type="project" value="UniProtKB"/>
</dbReference>
<dbReference type="GO" id="GO:0051301">
    <property type="term" value="P:cell division"/>
    <property type="evidence" value="ECO:0007669"/>
    <property type="project" value="UniProtKB-KW"/>
</dbReference>
<dbReference type="GO" id="GO:0000082">
    <property type="term" value="P:G1/S transition of mitotic cell cycle"/>
    <property type="evidence" value="ECO:0000318"/>
    <property type="project" value="GO_Central"/>
</dbReference>
<dbReference type="GO" id="GO:0000086">
    <property type="term" value="P:G2/M transition of mitotic cell cycle"/>
    <property type="evidence" value="ECO:0000314"/>
    <property type="project" value="UniProtKB"/>
</dbReference>
<dbReference type="GO" id="GO:0035329">
    <property type="term" value="P:hippo signaling"/>
    <property type="evidence" value="ECO:0000314"/>
    <property type="project" value="BHF-UCL"/>
</dbReference>
<dbReference type="GO" id="GO:0009755">
    <property type="term" value="P:hormone-mediated signaling pathway"/>
    <property type="evidence" value="ECO:0000250"/>
    <property type="project" value="UniProtKB"/>
</dbReference>
<dbReference type="GO" id="GO:0001827">
    <property type="term" value="P:inner cell mass cell fate commitment"/>
    <property type="evidence" value="ECO:0007669"/>
    <property type="project" value="Ensembl"/>
</dbReference>
<dbReference type="GO" id="GO:0001828">
    <property type="term" value="P:inner cell mass cellular morphogenesis"/>
    <property type="evidence" value="ECO:0007669"/>
    <property type="project" value="Ensembl"/>
</dbReference>
<dbReference type="GO" id="GO:0030216">
    <property type="term" value="P:keratinocyte differentiation"/>
    <property type="evidence" value="ECO:0007669"/>
    <property type="project" value="Ensembl"/>
</dbReference>
<dbReference type="GO" id="GO:0060644">
    <property type="term" value="P:mammary gland epithelial cell differentiation"/>
    <property type="evidence" value="ECO:0000315"/>
    <property type="project" value="UniProtKB"/>
</dbReference>
<dbReference type="GO" id="GO:0090090">
    <property type="term" value="P:negative regulation of canonical Wnt signaling pathway"/>
    <property type="evidence" value="ECO:0000315"/>
    <property type="project" value="BHF-UCL"/>
</dbReference>
<dbReference type="GO" id="GO:0045736">
    <property type="term" value="P:negative regulation of cyclin-dependent protein serine/threonine kinase activity"/>
    <property type="evidence" value="ECO:0000314"/>
    <property type="project" value="UniProtKB"/>
</dbReference>
<dbReference type="GO" id="GO:1900181">
    <property type="term" value="P:negative regulation of protein localization to nucleus"/>
    <property type="evidence" value="ECO:0000315"/>
    <property type="project" value="ARUK-UCL"/>
</dbReference>
<dbReference type="GO" id="GO:0043065">
    <property type="term" value="P:positive regulation of apoptotic process"/>
    <property type="evidence" value="ECO:0000318"/>
    <property type="project" value="GO_Central"/>
</dbReference>
<dbReference type="GO" id="GO:1900227">
    <property type="term" value="P:positive regulation of NLRP3 inflammasome complex assembly"/>
    <property type="evidence" value="ECO:0000314"/>
    <property type="project" value="UniProtKB"/>
</dbReference>
<dbReference type="GO" id="GO:0008104">
    <property type="term" value="P:protein localization"/>
    <property type="evidence" value="ECO:0007669"/>
    <property type="project" value="Ensembl"/>
</dbReference>
<dbReference type="GO" id="GO:0006468">
    <property type="term" value="P:protein phosphorylation"/>
    <property type="evidence" value="ECO:0000314"/>
    <property type="project" value="UniProtKB"/>
</dbReference>
<dbReference type="GO" id="GO:0030833">
    <property type="term" value="P:regulation of actin filament polymerization"/>
    <property type="evidence" value="ECO:0000314"/>
    <property type="project" value="UniProtKB"/>
</dbReference>
<dbReference type="GO" id="GO:0033146">
    <property type="term" value="P:regulation of intracellular estrogen receptor signaling pathway"/>
    <property type="evidence" value="ECO:0000315"/>
    <property type="project" value="UniProtKB"/>
</dbReference>
<dbReference type="GO" id="GO:0046620">
    <property type="term" value="P:regulation of organ growth"/>
    <property type="evidence" value="ECO:0000318"/>
    <property type="project" value="GO_Central"/>
</dbReference>
<dbReference type="GO" id="GO:0099151">
    <property type="term" value="P:regulation of postsynaptic density assembly"/>
    <property type="evidence" value="ECO:0007669"/>
    <property type="project" value="Ensembl"/>
</dbReference>
<dbReference type="GO" id="GO:0043254">
    <property type="term" value="P:regulation of protein-containing complex assembly"/>
    <property type="evidence" value="ECO:0000315"/>
    <property type="project" value="BHF-UCL"/>
</dbReference>
<dbReference type="GO" id="GO:0017015">
    <property type="term" value="P:regulation of transforming growth factor beta receptor signaling pathway"/>
    <property type="evidence" value="ECO:0000250"/>
    <property type="project" value="UniProtKB"/>
</dbReference>
<dbReference type="GO" id="GO:2000058">
    <property type="term" value="P:regulation of ubiquitin-dependent protein catabolic process"/>
    <property type="evidence" value="ECO:0000315"/>
    <property type="project" value="UniProtKB"/>
</dbReference>
<dbReference type="GO" id="GO:0000819">
    <property type="term" value="P:sister chromatid segregation"/>
    <property type="evidence" value="ECO:0000314"/>
    <property type="project" value="UniProtKB"/>
</dbReference>
<dbReference type="CDD" id="cd21778">
    <property type="entry name" value="MobB_LATS1"/>
    <property type="match status" value="1"/>
</dbReference>
<dbReference type="CDD" id="cd05625">
    <property type="entry name" value="STKc_LATS1"/>
    <property type="match status" value="1"/>
</dbReference>
<dbReference type="CDD" id="cd14397">
    <property type="entry name" value="UBA_LATS1"/>
    <property type="match status" value="1"/>
</dbReference>
<dbReference type="FunFam" id="3.30.200.20:FF:001246">
    <property type="entry name" value="Large tumor suppressor kinase 1"/>
    <property type="match status" value="1"/>
</dbReference>
<dbReference type="FunFam" id="1.10.510.10:FF:000086">
    <property type="entry name" value="Non-specific serine/threonine protein kinase"/>
    <property type="match status" value="1"/>
</dbReference>
<dbReference type="FunFam" id="1.10.510.10:FF:000199">
    <property type="entry name" value="Non-specific serine/threonine protein kinase"/>
    <property type="match status" value="1"/>
</dbReference>
<dbReference type="FunFam" id="1.10.8.10:FF:000029">
    <property type="entry name" value="Serine/threonine-protein kinase LATS1 isoform 1"/>
    <property type="match status" value="1"/>
</dbReference>
<dbReference type="Gene3D" id="1.10.8.10">
    <property type="entry name" value="DNA helicase RuvA subunit, C-terminal domain"/>
    <property type="match status" value="1"/>
</dbReference>
<dbReference type="Gene3D" id="3.30.200.20">
    <property type="entry name" value="Phosphorylase Kinase, domain 1"/>
    <property type="match status" value="2"/>
</dbReference>
<dbReference type="Gene3D" id="1.10.510.10">
    <property type="entry name" value="Transferase(Phosphotransferase) domain 1"/>
    <property type="match status" value="2"/>
</dbReference>
<dbReference type="InterPro" id="IPR000961">
    <property type="entry name" value="AGC-kinase_C"/>
</dbReference>
<dbReference type="InterPro" id="IPR011009">
    <property type="entry name" value="Kinase-like_dom_sf"/>
</dbReference>
<dbReference type="InterPro" id="IPR049761">
    <property type="entry name" value="LATS1-like_MobB"/>
</dbReference>
<dbReference type="InterPro" id="IPR042706">
    <property type="entry name" value="LATS1_STKc"/>
</dbReference>
<dbReference type="InterPro" id="IPR017892">
    <property type="entry name" value="Pkinase_C"/>
</dbReference>
<dbReference type="InterPro" id="IPR000719">
    <property type="entry name" value="Prot_kinase_dom"/>
</dbReference>
<dbReference type="InterPro" id="IPR008271">
    <property type="entry name" value="Ser/Thr_kinase_AS"/>
</dbReference>
<dbReference type="InterPro" id="IPR050236">
    <property type="entry name" value="Ser_Thr_kinase_AGC"/>
</dbReference>
<dbReference type="InterPro" id="IPR015940">
    <property type="entry name" value="UBA"/>
</dbReference>
<dbReference type="InterPro" id="IPR009060">
    <property type="entry name" value="UBA-like_sf"/>
</dbReference>
<dbReference type="PANTHER" id="PTHR24356">
    <property type="entry name" value="SERINE/THREONINE-PROTEIN KINASE"/>
    <property type="match status" value="1"/>
</dbReference>
<dbReference type="PANTHER" id="PTHR24356:SF138">
    <property type="entry name" value="SERINE_THREONINE-PROTEIN KINASE LATS1"/>
    <property type="match status" value="1"/>
</dbReference>
<dbReference type="Pfam" id="PF00069">
    <property type="entry name" value="Pkinase"/>
    <property type="match status" value="2"/>
</dbReference>
<dbReference type="Pfam" id="PF00433">
    <property type="entry name" value="Pkinase_C"/>
    <property type="match status" value="1"/>
</dbReference>
<dbReference type="Pfam" id="PF00627">
    <property type="entry name" value="UBA"/>
    <property type="match status" value="1"/>
</dbReference>
<dbReference type="SMART" id="SM00220">
    <property type="entry name" value="S_TKc"/>
    <property type="match status" value="1"/>
</dbReference>
<dbReference type="SUPFAM" id="SSF56112">
    <property type="entry name" value="Protein kinase-like (PK-like)"/>
    <property type="match status" value="1"/>
</dbReference>
<dbReference type="SUPFAM" id="SSF46934">
    <property type="entry name" value="UBA-like"/>
    <property type="match status" value="1"/>
</dbReference>
<dbReference type="PROSITE" id="PS51285">
    <property type="entry name" value="AGC_KINASE_CTER"/>
    <property type="match status" value="1"/>
</dbReference>
<dbReference type="PROSITE" id="PS50011">
    <property type="entry name" value="PROTEIN_KINASE_DOM"/>
    <property type="match status" value="1"/>
</dbReference>
<dbReference type="PROSITE" id="PS00108">
    <property type="entry name" value="PROTEIN_KINASE_ST"/>
    <property type="match status" value="1"/>
</dbReference>
<dbReference type="PROSITE" id="PS50030">
    <property type="entry name" value="UBA"/>
    <property type="match status" value="1"/>
</dbReference>
<gene>
    <name evidence="27" type="primary">LATS1</name>
    <name evidence="28" type="synonym">WARTS</name>
</gene>
<organism>
    <name type="scientific">Homo sapiens</name>
    <name type="common">Human</name>
    <dbReference type="NCBI Taxonomy" id="9606"/>
    <lineage>
        <taxon>Eukaryota</taxon>
        <taxon>Metazoa</taxon>
        <taxon>Chordata</taxon>
        <taxon>Craniata</taxon>
        <taxon>Vertebrata</taxon>
        <taxon>Euteleostomi</taxon>
        <taxon>Mammalia</taxon>
        <taxon>Eutheria</taxon>
        <taxon>Euarchontoglires</taxon>
        <taxon>Primates</taxon>
        <taxon>Haplorrhini</taxon>
        <taxon>Catarrhini</taxon>
        <taxon>Hominidae</taxon>
        <taxon>Homo</taxon>
    </lineage>
</organism>
<name>LATS1_HUMAN</name>
<proteinExistence type="evidence at protein level"/>
<accession>O95835</accession>
<accession>Q6PKD0</accession>
<reference evidence="26 27" key="1">
    <citation type="journal article" date="1999" name="Nat. Genet.">
        <title>Human homologue of the Drosophila melanogaster lats tumour suppressor modulates CDC2 activity.</title>
        <authorList>
            <person name="Tao W."/>
            <person name="Zhang S."/>
            <person name="Turenchalk G.S."/>
            <person name="Stewart R.A."/>
            <person name="St John M.A."/>
            <person name="Chen W."/>
            <person name="Xu T."/>
        </authorList>
    </citation>
    <scope>NUCLEOTIDE SEQUENCE [MRNA] (ISOFORM 1)</scope>
    <scope>FUNCTION</scope>
    <scope>PHOSPHORYLATION</scope>
    <scope>INTERACTION WITH CDK1</scope>
    <source>
        <tissue evidence="27">Fetal brain</tissue>
    </source>
</reference>
<reference evidence="26 28" key="2">
    <citation type="journal article" date="1999" name="FEBS Lett.">
        <title>A human homolog of Drosophila warts tumor suppressor, h-warts, localized to mitotic apparatus and specifically phosphorylated during mitosis.</title>
        <authorList>
            <person name="Nishiyama Y."/>
            <person name="Hirota T."/>
            <person name="Morisaki T."/>
            <person name="Hara T."/>
            <person name="Marumoto T."/>
            <person name="Iida S."/>
            <person name="Makino K."/>
            <person name="Yamamoto H."/>
            <person name="Hiraoka T."/>
            <person name="Kitamura N."/>
            <person name="Saya H."/>
        </authorList>
    </citation>
    <scope>NUCLEOTIDE SEQUENCE [MRNA] (ISOFORM 1)</scope>
    <scope>FUNCTION</scope>
    <scope>CATALYTIC ACTIVITY</scope>
    <scope>SUBCELLULAR LOCATION</scope>
    <scope>TISSUE SPECIFICITY</scope>
    <scope>PHOSPHORYLATION</scope>
</reference>
<reference evidence="26 29" key="3">
    <citation type="journal article" date="2004" name="Genome Res.">
        <title>The status, quality, and expansion of the NIH full-length cDNA project: the Mammalian Gene Collection (MGC).</title>
        <authorList>
            <consortium name="The MGC Project Team"/>
        </authorList>
    </citation>
    <scope>NUCLEOTIDE SEQUENCE [LARGE SCALE MRNA] (ISOFORM 2)</scope>
    <source>
        <tissue evidence="29">Endometrium</tissue>
    </source>
</reference>
<reference evidence="26" key="4">
    <citation type="journal article" date="2000" name="J. Cell Biol.">
        <title>Zyxin, a regulator of actin filament assembly, targets the mitotic apparatus by interacting with h-warts/LATS1 tumor suppressor.</title>
        <authorList>
            <person name="Hirota T."/>
            <person name="Morisaki T."/>
            <person name="Nishiyama Y."/>
            <person name="Marumoto T."/>
            <person name="Tada K."/>
            <person name="Hara T."/>
            <person name="Masuko N."/>
            <person name="Inagaki M."/>
            <person name="Hatakeyama K."/>
            <person name="Saya H."/>
        </authorList>
    </citation>
    <scope>FUNCTION</scope>
    <scope>INTERACTION WITH ZYX</scope>
</reference>
<reference key="5">
    <citation type="journal article" date="2004" name="Anal. Chem.">
        <title>Robust phosphoproteomic profiling of tyrosine phosphorylation sites from human T cells using immobilized metal affinity chromatography and tandem mass spectrometry.</title>
        <authorList>
            <person name="Brill L.M."/>
            <person name="Salomon A.R."/>
            <person name="Ficarro S.B."/>
            <person name="Mukherji M."/>
            <person name="Stettler-Gill M."/>
            <person name="Peters E.C."/>
        </authorList>
    </citation>
    <scope>IDENTIFICATION BY MASS SPECTROMETRY [LARGE SCALE ANALYSIS]</scope>
    <source>
        <tissue>Leukemic T-cell</tissue>
    </source>
</reference>
<reference evidence="26" key="6">
    <citation type="journal article" date="2004" name="Oncogene">
        <title>Tumor suppressor WARTS ensures genomic integrity by regulating both mitotic progression and G1 tetraploidy checkpoint function.</title>
        <authorList>
            <person name="Iida S."/>
            <person name="Hirota T."/>
            <person name="Morisaki T."/>
            <person name="Marumoto T."/>
            <person name="Hara T."/>
            <person name="Kuninaka S."/>
            <person name="Honda S."/>
            <person name="Kosai K."/>
            <person name="Kawasuji M."/>
            <person name="Pallas D.C."/>
            <person name="Saya H."/>
        </authorList>
    </citation>
    <scope>FUNCTION</scope>
    <scope>CATALYTIC ACTIVITY</scope>
    <scope>AUTOPHOSPHORYLATION</scope>
    <scope>MUTAGENESIS OF LYS-734</scope>
</reference>
<reference evidence="26" key="7">
    <citation type="journal article" date="2004" name="Nat. Cell Biol.">
        <title>LATS1 tumour suppressor affects cytokinesis by inhibiting LIMK1.</title>
        <authorList>
            <person name="Yang X."/>
            <person name="Yu K."/>
            <person name="Hao Y."/>
            <person name="Li D.-M."/>
            <person name="Stewart R.A."/>
            <person name="Insogna K.L."/>
            <person name="Xu T."/>
        </authorList>
    </citation>
    <scope>FUNCTION</scope>
    <scope>INTERACTION WITH LIMK1</scope>
</reference>
<reference key="8">
    <citation type="journal article" date="2005" name="Oncogene">
        <title>The Ste20-like kinase Mst2 activates the human large tumor suppressor kinase Lats1.</title>
        <authorList>
            <person name="Chan E.H.Y."/>
            <person name="Nousiainen M."/>
            <person name="Chalamalasetty R.B."/>
            <person name="Schaefer A."/>
            <person name="Nigg E.A."/>
            <person name="Sillje H.H.W."/>
        </authorList>
    </citation>
    <scope>PHOSPHORYLATION AT SER-909 AND THR-1079</scope>
</reference>
<reference key="9">
    <citation type="journal article" date="2007" name="Science">
        <title>ATM and ATR substrate analysis reveals extensive protein networks responsive to DNA damage.</title>
        <authorList>
            <person name="Matsuoka S."/>
            <person name="Ballif B.A."/>
            <person name="Smogorzewska A."/>
            <person name="McDonald E.R. III"/>
            <person name="Hurov K.E."/>
            <person name="Luo J."/>
            <person name="Bakalarski C.E."/>
            <person name="Zhao Z."/>
            <person name="Solimini N."/>
            <person name="Lerenthal Y."/>
            <person name="Shiloh Y."/>
            <person name="Gygi S.P."/>
            <person name="Elledge S.J."/>
        </authorList>
    </citation>
    <scope>PHOSPHORYLATION [LARGE SCALE ANALYSIS] AT SER-674</scope>
    <scope>IDENTIFICATION BY MASS SPECTROMETRY [LARGE SCALE ANALYSIS]</scope>
    <source>
        <tissue>Embryonic kidney</tissue>
    </source>
</reference>
<reference key="10">
    <citation type="journal article" date="2008" name="J. Biol. Chem.">
        <title>Tumor suppressor LATS1 is a negative regulator of oncogene YAP.</title>
        <authorList>
            <person name="Hao Y."/>
            <person name="Chun A."/>
            <person name="Cheung K."/>
            <person name="Rashidi B."/>
            <person name="Yang X."/>
        </authorList>
    </citation>
    <scope>FUNCTION</scope>
    <scope>INTERACTION WITH YAP1</scope>
    <scope>MUTAGENESIS OF TYR-559</scope>
</reference>
<reference key="11">
    <citation type="journal article" date="2008" name="Mol. Cell">
        <title>Kinase-selective enrichment enables quantitative phosphoproteomics of the kinome across the cell cycle.</title>
        <authorList>
            <person name="Daub H."/>
            <person name="Olsen J.V."/>
            <person name="Bairlein M."/>
            <person name="Gnad F."/>
            <person name="Oppermann F.S."/>
            <person name="Korner R."/>
            <person name="Greff Z."/>
            <person name="Keri G."/>
            <person name="Stemmann O."/>
            <person name="Mann M."/>
        </authorList>
    </citation>
    <scope>IDENTIFICATION BY MASS SPECTROMETRY [LARGE SCALE ANALYSIS]</scope>
    <source>
        <tissue>Cervix carcinoma</tissue>
    </source>
</reference>
<reference key="12">
    <citation type="journal article" date="2008" name="Proc. Natl. Acad. Sci. U.S.A.">
        <title>A quantitative atlas of mitotic phosphorylation.</title>
        <authorList>
            <person name="Dephoure N."/>
            <person name="Zhou C."/>
            <person name="Villen J."/>
            <person name="Beausoleil S.A."/>
            <person name="Bakalarski C.E."/>
            <person name="Elledge S.J."/>
            <person name="Gygi S.P."/>
        </authorList>
    </citation>
    <scope>PHOSPHORYLATION [LARGE SCALE ANALYSIS] AT THR-246; SER-278 AND SER-464</scope>
    <scope>IDENTIFICATION BY MASS SPECTROMETRY [LARGE SCALE ANALYSIS]</scope>
    <source>
        <tissue>Cervix carcinoma</tissue>
    </source>
</reference>
<reference key="13">
    <citation type="journal article" date="2009" name="Anal. Chem.">
        <title>Lys-N and trypsin cover complementary parts of the phosphoproteome in a refined SCX-based approach.</title>
        <authorList>
            <person name="Gauci S."/>
            <person name="Helbig A.O."/>
            <person name="Slijper M."/>
            <person name="Krijgsveld J."/>
            <person name="Heck A.J."/>
            <person name="Mohammed S."/>
        </authorList>
    </citation>
    <scope>IDENTIFICATION BY MASS SPECTROMETRY [LARGE SCALE ANALYSIS]</scope>
</reference>
<reference key="14">
    <citation type="journal article" date="2009" name="Mol. Cell. Proteomics">
        <title>Large-scale proteomics analysis of the human kinome.</title>
        <authorList>
            <person name="Oppermann F.S."/>
            <person name="Gnad F."/>
            <person name="Olsen J.V."/>
            <person name="Hornberger R."/>
            <person name="Greff Z."/>
            <person name="Keri G."/>
            <person name="Mann M."/>
            <person name="Daub H."/>
        </authorList>
    </citation>
    <scope>IDENTIFICATION BY MASS SPECTROMETRY [LARGE SCALE ANALYSIS]</scope>
</reference>
<reference key="15">
    <citation type="journal article" date="2009" name="Sci. Signal.">
        <title>Quantitative phosphoproteomic analysis of T cell receptor signaling reveals system-wide modulation of protein-protein interactions.</title>
        <authorList>
            <person name="Mayya V."/>
            <person name="Lundgren D.H."/>
            <person name="Hwang S.-I."/>
            <person name="Rezaul K."/>
            <person name="Wu L."/>
            <person name="Eng J.K."/>
            <person name="Rodionov V."/>
            <person name="Han D.K."/>
        </authorList>
    </citation>
    <scope>IDENTIFICATION BY MASS SPECTROMETRY [LARGE SCALE ANALYSIS]</scope>
    <source>
        <tissue>Leukemic T-cell</tissue>
    </source>
</reference>
<reference key="16">
    <citation type="journal article" date="2010" name="Curr. Biol.">
        <title>Ajuba LIM proteins are negative regulators of the Hippo signaling pathway.</title>
        <authorList>
            <person name="Das Thakur M."/>
            <person name="Feng Y."/>
            <person name="Jagannathan R."/>
            <person name="Seppa M.J."/>
            <person name="Skeath J.B."/>
            <person name="Longmore G.D."/>
        </authorList>
    </citation>
    <scope>INTERACTION WITH LIMD1; WTIP AND AJUBA</scope>
</reference>
<reference key="17">
    <citation type="journal article" date="2010" name="Int. J. Cancer">
        <title>Molecular characterization of human homologs of yeast MOB1.</title>
        <authorList>
            <person name="Chow A."/>
            <person name="Hao Y."/>
            <person name="Yang X."/>
        </authorList>
    </citation>
    <scope>INTERACTION WITH MOB1A AND MOB1B</scope>
</reference>
<reference key="18">
    <citation type="journal article" date="2010" name="EMBO J.">
        <title>Regulation of ploidy and senescence by the AMPK-related kinase NUAK1.</title>
        <authorList>
            <person name="Humbert N."/>
            <person name="Navaratnam N."/>
            <person name="Augert A."/>
            <person name="Da Costa M."/>
            <person name="Martien S."/>
            <person name="Wang J."/>
            <person name="Martinez D."/>
            <person name="Abbadie C."/>
            <person name="Carling D."/>
            <person name="de Launoit Y."/>
            <person name="Gil J."/>
            <person name="Bernard D."/>
        </authorList>
    </citation>
    <scope>FUNCTION</scope>
    <scope>PHOSPHORYLATION AT SER-464</scope>
    <scope>MUTAGENESIS OF SER-464</scope>
</reference>
<reference key="19">
    <citation type="journal article" date="2013" name="J. Proteome Res.">
        <title>Toward a comprehensive characterization of a human cancer cell phosphoproteome.</title>
        <authorList>
            <person name="Zhou H."/>
            <person name="Di Palma S."/>
            <person name="Preisinger C."/>
            <person name="Peng M."/>
            <person name="Polat A.N."/>
            <person name="Heck A.J."/>
            <person name="Mohammed S."/>
        </authorList>
    </citation>
    <scope>PHOSPHORYLATION [LARGE SCALE ANALYSIS] AT THR-246; SER-464 AND SER-613</scope>
    <scope>IDENTIFICATION BY MASS SPECTROMETRY [LARGE SCALE ANALYSIS]</scope>
    <source>
        <tissue>Cervix carcinoma</tissue>
        <tissue>Erythroleukemia</tissue>
    </source>
</reference>
<reference key="20">
    <citation type="journal article" date="2014" name="J. Proteomics">
        <title>An enzyme assisted RP-RPLC approach for in-depth analysis of human liver phosphoproteome.</title>
        <authorList>
            <person name="Bian Y."/>
            <person name="Song C."/>
            <person name="Cheng K."/>
            <person name="Dong M."/>
            <person name="Wang F."/>
            <person name="Huang J."/>
            <person name="Sun D."/>
            <person name="Wang L."/>
            <person name="Ye M."/>
            <person name="Zou H."/>
        </authorList>
    </citation>
    <scope>IDENTIFICATION BY MASS SPECTROMETRY [LARGE SCALE ANALYSIS]</scope>
    <source>
        <tissue>Liver</tissue>
    </source>
</reference>
<reference key="21">
    <citation type="journal article" date="2014" name="Mol. Biol. Evol.">
        <title>Evolutionary and Molecular Facts Link the WWC Protein Family to Hippo Signaling.</title>
        <authorList>
            <person name="Wennmann D.O."/>
            <person name="Schmitz J."/>
            <person name="Wehr M.C."/>
            <person name="Krahn M.P."/>
            <person name="Koschmal N."/>
            <person name="Gromnitza S."/>
            <person name="Schulze U."/>
            <person name="Weide T."/>
            <person name="Chekuri A."/>
            <person name="Skryabin B.V."/>
            <person name="Gerke V."/>
            <person name="Pavenstadt H."/>
            <person name="Duning K."/>
            <person name="Kremerskothen J."/>
        </authorList>
    </citation>
    <scope>INTERACTION WITH WWC1; WWC2 AND WWC3</scope>
</reference>
<reference key="22">
    <citation type="journal article" date="2015" name="Nat. Commun.">
        <title>MAP4K family kinases act in parallel to MST1/2 to activate LATS1/2 in the Hippo pathway.</title>
        <authorList>
            <person name="Meng Z."/>
            <person name="Moroishi T."/>
            <person name="Mottier-Pavie V."/>
            <person name="Plouffe S.W."/>
            <person name="Hansen C.G."/>
            <person name="Hong A.W."/>
            <person name="Park H.W."/>
            <person name="Mo J.S."/>
            <person name="Lu W."/>
            <person name="Lu S."/>
            <person name="Flores F."/>
            <person name="Yu F.X."/>
            <person name="Halder G."/>
            <person name="Guan K.L."/>
        </authorList>
    </citation>
    <scope>FUNCTION</scope>
    <scope>PHOSPHORYLATION BY MAP4K</scope>
</reference>
<reference key="23">
    <citation type="journal article" date="2016" name="Genes Dev.">
        <title>DLG5 connects cell polarity and Hippo signaling protein networks by linking PAR-1 with MST1/2.</title>
        <authorList>
            <person name="Kwan J."/>
            <person name="Sczaniecka A."/>
            <person name="Arash E.H."/>
            <person name="Nguyen L."/>
            <person name="Chen C.C."/>
            <person name="Ratkovic S."/>
            <person name="Klezovitch O."/>
            <person name="Attisano L."/>
            <person name="McNeill H."/>
            <person name="Emili A."/>
            <person name="Vasioukhin V."/>
        </authorList>
    </citation>
    <scope>INTERACTION WITH STK3</scope>
    <scope>PHOSPHORYLATION AT THR-1079</scope>
</reference>
<reference key="24">
    <citation type="journal article" date="2017" name="Nature">
        <title>The Hippo kinases LATS1 and 2 control human breast cell fate via crosstalk with ERalpha.</title>
        <authorList>
            <person name="Britschgi A."/>
            <person name="Duss S."/>
            <person name="Kim S."/>
            <person name="Couto J.P."/>
            <person name="Brinkhaus H."/>
            <person name="Koren S."/>
            <person name="De Silva D."/>
            <person name="Mertz K.D."/>
            <person name="Kaup D."/>
            <person name="Varga Z."/>
            <person name="Voshol H."/>
            <person name="Vissieres A."/>
            <person name="Leroy C."/>
            <person name="Roloff T."/>
            <person name="Stadler M.B."/>
            <person name="Scheel C.H."/>
            <person name="Miraglia L.J."/>
            <person name="Orth A.P."/>
            <person name="Bonamy G.M."/>
            <person name="Reddy V.A."/>
            <person name="Bentires-Alj M."/>
        </authorList>
    </citation>
    <scope>FUNCTION</scope>
    <scope>INTERACTION WITH DCAF13; ESR1 AND DCAF1</scope>
</reference>
<reference key="25">
    <citation type="journal article" date="2017" name="Sci. Rep.">
        <title>Loss of DLG5 promotes breast cancer malignancy by inhibiting the Hippo signaling pathway.</title>
        <authorList>
            <person name="Liu J."/>
            <person name="Li J."/>
            <person name="Li P."/>
            <person name="Wang Y."/>
            <person name="Liang Z."/>
            <person name="Jiang Y."/>
            <person name="Li J."/>
            <person name="Feng C."/>
            <person name="Wang R."/>
            <person name="Chen H."/>
            <person name="Zhou C."/>
            <person name="Zhang J."/>
            <person name="Yang J."/>
            <person name="Liu P."/>
        </authorList>
    </citation>
    <scope>INTERACTION WITH SCRIB</scope>
</reference>
<reference key="26">
    <citation type="journal article" date="2024" name="Mol. Cell">
        <title>Consecutive palmitoylation and phosphorylation orchestrates NLRP3 membrane trafficking and inflammasome activation.</title>
        <authorList>
            <person name="Nie L."/>
            <person name="Fei C."/>
            <person name="Fan Y."/>
            <person name="Dang F."/>
            <person name="Zhao Z."/>
            <person name="Zhu T."/>
            <person name="Wu X."/>
            <person name="Dai T."/>
            <person name="Balasubramanian A."/>
            <person name="Pan J."/>
            <person name="Hu Y."/>
            <person name="Luo H.R."/>
            <person name="Wei W."/>
            <person name="Chen J."/>
        </authorList>
    </citation>
    <scope>FUNCTION</scope>
    <scope>CATALYTIC ACTIVITY</scope>
</reference>
<reference key="27">
    <citation type="journal article" date="2007" name="Nature">
        <title>Patterns of somatic mutation in human cancer genomes.</title>
        <authorList>
            <person name="Greenman C."/>
            <person name="Stephens P."/>
            <person name="Smith R."/>
            <person name="Dalgliesh G.L."/>
            <person name="Hunter C."/>
            <person name="Bignell G."/>
            <person name="Davies H."/>
            <person name="Teague J."/>
            <person name="Butler A."/>
            <person name="Stevens C."/>
            <person name="Edkins S."/>
            <person name="O'Meara S."/>
            <person name="Vastrik I."/>
            <person name="Schmidt E.E."/>
            <person name="Avis T."/>
            <person name="Barthorpe S."/>
            <person name="Bhamra G."/>
            <person name="Buck G."/>
            <person name="Choudhury B."/>
            <person name="Clements J."/>
            <person name="Cole J."/>
            <person name="Dicks E."/>
            <person name="Forbes S."/>
            <person name="Gray K."/>
            <person name="Halliday K."/>
            <person name="Harrison R."/>
            <person name="Hills K."/>
            <person name="Hinton J."/>
            <person name="Jenkinson A."/>
            <person name="Jones D."/>
            <person name="Menzies A."/>
            <person name="Mironenko T."/>
            <person name="Perry J."/>
            <person name="Raine K."/>
            <person name="Richardson D."/>
            <person name="Shepherd R."/>
            <person name="Small A."/>
            <person name="Tofts C."/>
            <person name="Varian J."/>
            <person name="Webb T."/>
            <person name="West S."/>
            <person name="Widaa S."/>
            <person name="Yates A."/>
            <person name="Cahill D.P."/>
            <person name="Louis D.N."/>
            <person name="Goldstraw P."/>
            <person name="Nicholson A.G."/>
            <person name="Brasseur F."/>
            <person name="Looijenga L."/>
            <person name="Weber B.L."/>
            <person name="Chiew Y.-E."/>
            <person name="DeFazio A."/>
            <person name="Greaves M.F."/>
            <person name="Green A.R."/>
            <person name="Campbell P."/>
            <person name="Birney E."/>
            <person name="Easton D.F."/>
            <person name="Chenevix-Trench G."/>
            <person name="Tan M.-H."/>
            <person name="Khoo S.K."/>
            <person name="Teh B.T."/>
            <person name="Yuen S.T."/>
            <person name="Leung S.Y."/>
            <person name="Wooster R."/>
            <person name="Futreal P.A."/>
            <person name="Stratton M.R."/>
        </authorList>
    </citation>
    <scope>VARIANTS [LARGE SCALE ANALYSIS] TRP-96; GLY-204; GLN-237; TRP-370; SER-531; LEU-641; ILE-669; PRO-806 AND SER-1000</scope>
</reference>
<keyword id="KW-0002">3D-structure</keyword>
<keyword id="KW-0025">Alternative splicing</keyword>
<keyword id="KW-0067">ATP-binding</keyword>
<keyword id="KW-0131">Cell cycle</keyword>
<keyword id="KW-0132">Cell division</keyword>
<keyword id="KW-0963">Cytoplasm</keyword>
<keyword id="KW-0206">Cytoskeleton</keyword>
<keyword id="KW-0418">Kinase</keyword>
<keyword id="KW-0460">Magnesium</keyword>
<keyword id="KW-0479">Metal-binding</keyword>
<keyword id="KW-0498">Mitosis</keyword>
<keyword id="KW-0547">Nucleotide-binding</keyword>
<keyword id="KW-0597">Phosphoprotein</keyword>
<keyword id="KW-1267">Proteomics identification</keyword>
<keyword id="KW-1185">Reference proteome</keyword>
<keyword id="KW-0723">Serine/threonine-protein kinase</keyword>
<keyword id="KW-0808">Transferase</keyword>
<keyword id="KW-0043">Tumor suppressor</keyword>
<evidence type="ECO:0000250" key="1">
    <source>
        <dbReference type="UniProtKB" id="P22612"/>
    </source>
</evidence>
<evidence type="ECO:0000250" key="2">
    <source>
        <dbReference type="UniProtKB" id="Q8BYR2"/>
    </source>
</evidence>
<evidence type="ECO:0000255" key="3">
    <source>
        <dbReference type="PROSITE-ProRule" id="PRU00159"/>
    </source>
</evidence>
<evidence type="ECO:0000255" key="4">
    <source>
        <dbReference type="PROSITE-ProRule" id="PRU00212"/>
    </source>
</evidence>
<evidence type="ECO:0000255" key="5">
    <source>
        <dbReference type="PROSITE-ProRule" id="PRU00618"/>
    </source>
</evidence>
<evidence type="ECO:0000255" key="6">
    <source>
        <dbReference type="PROSITE-ProRule" id="PRU10027"/>
    </source>
</evidence>
<evidence type="ECO:0000256" key="7">
    <source>
        <dbReference type="SAM" id="MobiDB-lite"/>
    </source>
</evidence>
<evidence type="ECO:0000269" key="8">
    <source>
    </source>
</evidence>
<evidence type="ECO:0000269" key="9">
    <source>
    </source>
</evidence>
<evidence type="ECO:0000269" key="10">
    <source>
    </source>
</evidence>
<evidence type="ECO:0000269" key="11">
    <source>
    </source>
</evidence>
<evidence type="ECO:0000269" key="12">
    <source>
    </source>
</evidence>
<evidence type="ECO:0000269" key="13">
    <source>
    </source>
</evidence>
<evidence type="ECO:0000269" key="14">
    <source>
    </source>
</evidence>
<evidence type="ECO:0000269" key="15">
    <source>
    </source>
</evidence>
<evidence type="ECO:0000269" key="16">
    <source>
    </source>
</evidence>
<evidence type="ECO:0000269" key="17">
    <source>
    </source>
</evidence>
<evidence type="ECO:0000269" key="18">
    <source>
    </source>
</evidence>
<evidence type="ECO:0000269" key="19">
    <source>
    </source>
</evidence>
<evidence type="ECO:0000269" key="20">
    <source>
    </source>
</evidence>
<evidence type="ECO:0000269" key="21">
    <source>
    </source>
</evidence>
<evidence type="ECO:0000269" key="22">
    <source>
    </source>
</evidence>
<evidence type="ECO:0000269" key="23">
    <source>
    </source>
</evidence>
<evidence type="ECO:0000269" key="24">
    <source>
    </source>
</evidence>
<evidence type="ECO:0000303" key="25">
    <source>
    </source>
</evidence>
<evidence type="ECO:0000305" key="26"/>
<evidence type="ECO:0000312" key="27">
    <source>
        <dbReference type="EMBL" id="AAD16882.1"/>
    </source>
</evidence>
<evidence type="ECO:0000312" key="28">
    <source>
        <dbReference type="EMBL" id="AAD50272.1"/>
    </source>
</evidence>
<evidence type="ECO:0000312" key="29">
    <source>
        <dbReference type="EMBL" id="AAH02767.1"/>
    </source>
</evidence>
<evidence type="ECO:0007744" key="30">
    <source>
    </source>
</evidence>
<evidence type="ECO:0007744" key="31">
    <source>
    </source>
</evidence>
<evidence type="ECO:0007744" key="32">
    <source>
    </source>
</evidence>
<evidence type="ECO:0007829" key="33">
    <source>
        <dbReference type="PDB" id="5BRK"/>
    </source>
</evidence>
<evidence type="ECO:0007829" key="34">
    <source>
        <dbReference type="PDB" id="7LWH"/>
    </source>
</evidence>